<dbReference type="EC" id="3.4.21.92" evidence="1"/>
<dbReference type="EMBL" id="CP000572">
    <property type="protein sequence ID" value="ABN88655.1"/>
    <property type="molecule type" value="Genomic_DNA"/>
</dbReference>
<dbReference type="RefSeq" id="WP_004193408.1">
    <property type="nucleotide sequence ID" value="NC_009076.1"/>
</dbReference>
<dbReference type="SMR" id="A3NWA6"/>
<dbReference type="MEROPS" id="S14.001"/>
<dbReference type="GeneID" id="92979196"/>
<dbReference type="KEGG" id="bpl:BURPS1106A_2365"/>
<dbReference type="HOGENOM" id="CLU_058707_3_2_4"/>
<dbReference type="Proteomes" id="UP000006738">
    <property type="component" value="Chromosome I"/>
</dbReference>
<dbReference type="GO" id="GO:0005737">
    <property type="term" value="C:cytoplasm"/>
    <property type="evidence" value="ECO:0007669"/>
    <property type="project" value="UniProtKB-SubCell"/>
</dbReference>
<dbReference type="GO" id="GO:0009368">
    <property type="term" value="C:endopeptidase Clp complex"/>
    <property type="evidence" value="ECO:0007669"/>
    <property type="project" value="TreeGrafter"/>
</dbReference>
<dbReference type="GO" id="GO:0004176">
    <property type="term" value="F:ATP-dependent peptidase activity"/>
    <property type="evidence" value="ECO:0007669"/>
    <property type="project" value="InterPro"/>
</dbReference>
<dbReference type="GO" id="GO:0051117">
    <property type="term" value="F:ATPase binding"/>
    <property type="evidence" value="ECO:0007669"/>
    <property type="project" value="TreeGrafter"/>
</dbReference>
<dbReference type="GO" id="GO:0004252">
    <property type="term" value="F:serine-type endopeptidase activity"/>
    <property type="evidence" value="ECO:0007669"/>
    <property type="project" value="UniProtKB-UniRule"/>
</dbReference>
<dbReference type="GO" id="GO:0006515">
    <property type="term" value="P:protein quality control for misfolded or incompletely synthesized proteins"/>
    <property type="evidence" value="ECO:0007669"/>
    <property type="project" value="TreeGrafter"/>
</dbReference>
<dbReference type="CDD" id="cd07017">
    <property type="entry name" value="S14_ClpP_2"/>
    <property type="match status" value="1"/>
</dbReference>
<dbReference type="FunFam" id="3.90.226.10:FF:000001">
    <property type="entry name" value="ATP-dependent Clp protease proteolytic subunit"/>
    <property type="match status" value="1"/>
</dbReference>
<dbReference type="Gene3D" id="3.90.226.10">
    <property type="entry name" value="2-enoyl-CoA Hydratase, Chain A, domain 1"/>
    <property type="match status" value="1"/>
</dbReference>
<dbReference type="HAMAP" id="MF_00444">
    <property type="entry name" value="ClpP"/>
    <property type="match status" value="1"/>
</dbReference>
<dbReference type="InterPro" id="IPR001907">
    <property type="entry name" value="ClpP"/>
</dbReference>
<dbReference type="InterPro" id="IPR029045">
    <property type="entry name" value="ClpP/crotonase-like_dom_sf"/>
</dbReference>
<dbReference type="InterPro" id="IPR023562">
    <property type="entry name" value="ClpP/TepA"/>
</dbReference>
<dbReference type="InterPro" id="IPR033135">
    <property type="entry name" value="ClpP_His_AS"/>
</dbReference>
<dbReference type="InterPro" id="IPR018215">
    <property type="entry name" value="ClpP_Ser_AS"/>
</dbReference>
<dbReference type="NCBIfam" id="TIGR00493">
    <property type="entry name" value="clpP"/>
    <property type="match status" value="1"/>
</dbReference>
<dbReference type="NCBIfam" id="NF001368">
    <property type="entry name" value="PRK00277.1"/>
    <property type="match status" value="1"/>
</dbReference>
<dbReference type="NCBIfam" id="NF009205">
    <property type="entry name" value="PRK12553.1"/>
    <property type="match status" value="1"/>
</dbReference>
<dbReference type="PANTHER" id="PTHR10381">
    <property type="entry name" value="ATP-DEPENDENT CLP PROTEASE PROTEOLYTIC SUBUNIT"/>
    <property type="match status" value="1"/>
</dbReference>
<dbReference type="PANTHER" id="PTHR10381:SF70">
    <property type="entry name" value="ATP-DEPENDENT CLP PROTEASE PROTEOLYTIC SUBUNIT"/>
    <property type="match status" value="1"/>
</dbReference>
<dbReference type="Pfam" id="PF00574">
    <property type="entry name" value="CLP_protease"/>
    <property type="match status" value="1"/>
</dbReference>
<dbReference type="PRINTS" id="PR00127">
    <property type="entry name" value="CLPPROTEASEP"/>
</dbReference>
<dbReference type="SUPFAM" id="SSF52096">
    <property type="entry name" value="ClpP/crotonase"/>
    <property type="match status" value="1"/>
</dbReference>
<dbReference type="PROSITE" id="PS00382">
    <property type="entry name" value="CLP_PROTEASE_HIS"/>
    <property type="match status" value="1"/>
</dbReference>
<dbReference type="PROSITE" id="PS00381">
    <property type="entry name" value="CLP_PROTEASE_SER"/>
    <property type="match status" value="1"/>
</dbReference>
<protein>
    <recommendedName>
        <fullName evidence="1">ATP-dependent Clp protease proteolytic subunit</fullName>
        <ecNumber evidence="1">3.4.21.92</ecNumber>
    </recommendedName>
    <alternativeName>
        <fullName evidence="1">Endopeptidase Clp</fullName>
    </alternativeName>
</protein>
<proteinExistence type="inferred from homology"/>
<comment type="function">
    <text evidence="1">Cleaves peptides in various proteins in a process that requires ATP hydrolysis. Has a chymotrypsin-like activity. Plays a major role in the degradation of misfolded proteins.</text>
</comment>
<comment type="catalytic activity">
    <reaction evidence="1">
        <text>Hydrolysis of proteins to small peptides in the presence of ATP and magnesium. alpha-casein is the usual test substrate. In the absence of ATP, only oligopeptides shorter than five residues are hydrolyzed (such as succinyl-Leu-Tyr-|-NHMec, and Leu-Tyr-Leu-|-Tyr-Trp, in which cleavage of the -Tyr-|-Leu- and -Tyr-|-Trp bonds also occurs).</text>
        <dbReference type="EC" id="3.4.21.92"/>
    </reaction>
</comment>
<comment type="subunit">
    <text evidence="1">Fourteen ClpP subunits assemble into 2 heptameric rings which stack back to back to give a disk-like structure with a central cavity, resembling the structure of eukaryotic proteasomes.</text>
</comment>
<comment type="subcellular location">
    <subcellularLocation>
        <location evidence="1">Cytoplasm</location>
    </subcellularLocation>
</comment>
<comment type="similarity">
    <text evidence="1">Belongs to the peptidase S14 family.</text>
</comment>
<accession>A3NWA6</accession>
<reference key="1">
    <citation type="journal article" date="2010" name="Genome Biol. Evol.">
        <title>Continuing evolution of Burkholderia mallei through genome reduction and large-scale rearrangements.</title>
        <authorList>
            <person name="Losada L."/>
            <person name="Ronning C.M."/>
            <person name="DeShazer D."/>
            <person name="Woods D."/>
            <person name="Fedorova N."/>
            <person name="Kim H.S."/>
            <person name="Shabalina S.A."/>
            <person name="Pearson T.R."/>
            <person name="Brinkac L."/>
            <person name="Tan P."/>
            <person name="Nandi T."/>
            <person name="Crabtree J."/>
            <person name="Badger J."/>
            <person name="Beckstrom-Sternberg S."/>
            <person name="Saqib M."/>
            <person name="Schutzer S.E."/>
            <person name="Keim P."/>
            <person name="Nierman W.C."/>
        </authorList>
    </citation>
    <scope>NUCLEOTIDE SEQUENCE [LARGE SCALE GENOMIC DNA]</scope>
    <source>
        <strain>1106a</strain>
    </source>
</reference>
<gene>
    <name evidence="1" type="primary">clpP</name>
    <name type="ordered locus">BURPS1106A_2365</name>
</gene>
<sequence>MINRAQLLDTLASQAPRDFEAQALGLVPIVVETSGRGERSYDIYSRLLKERIVFMVGEVNDQTANLVVAQLLFLESENPDKDISLYINSPGGSVSAGMAIYDTMQFVKPDVSTLCMGLAASMGAFLLASGAKGKRYALPNARVMIHQPLGGARGQASDIEIQAREILYLRDRLNHLLAHHTGQDVERIARDTDRDNFMSSEDAKAYGLIDHVSTKRP</sequence>
<organism>
    <name type="scientific">Burkholderia pseudomallei (strain 1106a)</name>
    <dbReference type="NCBI Taxonomy" id="357348"/>
    <lineage>
        <taxon>Bacteria</taxon>
        <taxon>Pseudomonadati</taxon>
        <taxon>Pseudomonadota</taxon>
        <taxon>Betaproteobacteria</taxon>
        <taxon>Burkholderiales</taxon>
        <taxon>Burkholderiaceae</taxon>
        <taxon>Burkholderia</taxon>
        <taxon>pseudomallei group</taxon>
    </lineage>
</organism>
<keyword id="KW-0963">Cytoplasm</keyword>
<keyword id="KW-0378">Hydrolase</keyword>
<keyword id="KW-0645">Protease</keyword>
<keyword id="KW-0720">Serine protease</keyword>
<name>CLPP_BURP0</name>
<evidence type="ECO:0000255" key="1">
    <source>
        <dbReference type="HAMAP-Rule" id="MF_00444"/>
    </source>
</evidence>
<feature type="chain" id="PRO_1000026073" description="ATP-dependent Clp protease proteolytic subunit">
    <location>
        <begin position="1"/>
        <end position="217"/>
    </location>
</feature>
<feature type="active site" description="Nucleophile" evidence="1">
    <location>
        <position position="121"/>
    </location>
</feature>
<feature type="active site" evidence="1">
    <location>
        <position position="146"/>
    </location>
</feature>